<proteinExistence type="inferred from homology"/>
<sequence length="96" mass="11153">MAKYEILYIIRPNIEEEAKNALVARFDSILTDNGATVVESKTWEKRRLAYEIQDFREGLYHIVNVEANDDAALKEFDRLSKINADILRHMIVKIDA</sequence>
<protein>
    <recommendedName>
        <fullName evidence="1">Small ribosomal subunit protein bS6</fullName>
    </recommendedName>
    <alternativeName>
        <fullName evidence="2">30S ribosomal protein S6</fullName>
    </alternativeName>
</protein>
<name>RS6_STRZP</name>
<feature type="chain" id="PRO_1000133550" description="Small ribosomal subunit protein bS6">
    <location>
        <begin position="1"/>
        <end position="96"/>
    </location>
</feature>
<reference key="1">
    <citation type="journal article" date="2010" name="Genome Biol.">
        <title>Structure and dynamics of the pan-genome of Streptococcus pneumoniae and closely related species.</title>
        <authorList>
            <person name="Donati C."/>
            <person name="Hiller N.L."/>
            <person name="Tettelin H."/>
            <person name="Muzzi A."/>
            <person name="Croucher N.J."/>
            <person name="Angiuoli S.V."/>
            <person name="Oggioni M."/>
            <person name="Dunning Hotopp J.C."/>
            <person name="Hu F.Z."/>
            <person name="Riley D.R."/>
            <person name="Covacci A."/>
            <person name="Mitchell T.J."/>
            <person name="Bentley S.D."/>
            <person name="Kilian M."/>
            <person name="Ehrlich G.D."/>
            <person name="Rappuoli R."/>
            <person name="Moxon E.R."/>
            <person name="Masignani V."/>
        </authorList>
    </citation>
    <scope>NUCLEOTIDE SEQUENCE [LARGE SCALE GENOMIC DNA]</scope>
    <source>
        <strain>P1031</strain>
    </source>
</reference>
<accession>C1CLP0</accession>
<dbReference type="EMBL" id="CP000920">
    <property type="protein sequence ID" value="ACO21052.1"/>
    <property type="molecule type" value="Genomic_DNA"/>
</dbReference>
<dbReference type="RefSeq" id="WP_001151785.1">
    <property type="nucleotide sequence ID" value="NC_012467.1"/>
</dbReference>
<dbReference type="SMR" id="C1CLP0"/>
<dbReference type="GeneID" id="45653220"/>
<dbReference type="KEGG" id="spp:SPP_1564"/>
<dbReference type="HOGENOM" id="CLU_113441_5_3_9"/>
<dbReference type="GO" id="GO:0005737">
    <property type="term" value="C:cytoplasm"/>
    <property type="evidence" value="ECO:0007669"/>
    <property type="project" value="UniProtKB-ARBA"/>
</dbReference>
<dbReference type="GO" id="GO:1990904">
    <property type="term" value="C:ribonucleoprotein complex"/>
    <property type="evidence" value="ECO:0007669"/>
    <property type="project" value="UniProtKB-KW"/>
</dbReference>
<dbReference type="GO" id="GO:0005840">
    <property type="term" value="C:ribosome"/>
    <property type="evidence" value="ECO:0007669"/>
    <property type="project" value="UniProtKB-KW"/>
</dbReference>
<dbReference type="GO" id="GO:0070181">
    <property type="term" value="F:small ribosomal subunit rRNA binding"/>
    <property type="evidence" value="ECO:0007669"/>
    <property type="project" value="TreeGrafter"/>
</dbReference>
<dbReference type="GO" id="GO:0003735">
    <property type="term" value="F:structural constituent of ribosome"/>
    <property type="evidence" value="ECO:0007669"/>
    <property type="project" value="InterPro"/>
</dbReference>
<dbReference type="GO" id="GO:0006412">
    <property type="term" value="P:translation"/>
    <property type="evidence" value="ECO:0007669"/>
    <property type="project" value="UniProtKB-UniRule"/>
</dbReference>
<dbReference type="CDD" id="cd00473">
    <property type="entry name" value="bS6"/>
    <property type="match status" value="1"/>
</dbReference>
<dbReference type="FunFam" id="3.30.70.60:FF:000002">
    <property type="entry name" value="30S ribosomal protein S6"/>
    <property type="match status" value="1"/>
</dbReference>
<dbReference type="Gene3D" id="3.30.70.60">
    <property type="match status" value="1"/>
</dbReference>
<dbReference type="HAMAP" id="MF_00360">
    <property type="entry name" value="Ribosomal_bS6"/>
    <property type="match status" value="1"/>
</dbReference>
<dbReference type="InterPro" id="IPR000529">
    <property type="entry name" value="Ribosomal_bS6"/>
</dbReference>
<dbReference type="InterPro" id="IPR035980">
    <property type="entry name" value="Ribosomal_bS6_sf"/>
</dbReference>
<dbReference type="InterPro" id="IPR020814">
    <property type="entry name" value="Ribosomal_S6_plastid/chlpt"/>
</dbReference>
<dbReference type="InterPro" id="IPR014717">
    <property type="entry name" value="Transl_elong_EF1B/ribsomal_bS6"/>
</dbReference>
<dbReference type="NCBIfam" id="TIGR00166">
    <property type="entry name" value="S6"/>
    <property type="match status" value="1"/>
</dbReference>
<dbReference type="PANTHER" id="PTHR21011">
    <property type="entry name" value="MITOCHONDRIAL 28S RIBOSOMAL PROTEIN S6"/>
    <property type="match status" value="1"/>
</dbReference>
<dbReference type="PANTHER" id="PTHR21011:SF1">
    <property type="entry name" value="SMALL RIBOSOMAL SUBUNIT PROTEIN BS6M"/>
    <property type="match status" value="1"/>
</dbReference>
<dbReference type="Pfam" id="PF01250">
    <property type="entry name" value="Ribosomal_S6"/>
    <property type="match status" value="1"/>
</dbReference>
<dbReference type="SUPFAM" id="SSF54995">
    <property type="entry name" value="Ribosomal protein S6"/>
    <property type="match status" value="1"/>
</dbReference>
<gene>
    <name evidence="1" type="primary">rpsF</name>
    <name type="ordered locus">SPP_1564</name>
</gene>
<evidence type="ECO:0000255" key="1">
    <source>
        <dbReference type="HAMAP-Rule" id="MF_00360"/>
    </source>
</evidence>
<evidence type="ECO:0000305" key="2"/>
<comment type="function">
    <text evidence="1">Binds together with bS18 to 16S ribosomal RNA.</text>
</comment>
<comment type="similarity">
    <text evidence="1">Belongs to the bacterial ribosomal protein bS6 family.</text>
</comment>
<keyword id="KW-0687">Ribonucleoprotein</keyword>
<keyword id="KW-0689">Ribosomal protein</keyword>
<keyword id="KW-0694">RNA-binding</keyword>
<keyword id="KW-0699">rRNA-binding</keyword>
<organism>
    <name type="scientific">Streptococcus pneumoniae (strain P1031)</name>
    <dbReference type="NCBI Taxonomy" id="488223"/>
    <lineage>
        <taxon>Bacteria</taxon>
        <taxon>Bacillati</taxon>
        <taxon>Bacillota</taxon>
        <taxon>Bacilli</taxon>
        <taxon>Lactobacillales</taxon>
        <taxon>Streptococcaceae</taxon>
        <taxon>Streptococcus</taxon>
    </lineage>
</organism>